<keyword id="KW-0240">DNA-directed RNA polymerase</keyword>
<keyword id="KW-0548">Nucleotidyltransferase</keyword>
<keyword id="KW-0804">Transcription</keyword>
<keyword id="KW-0808">Transferase</keyword>
<sequence>MVYSYTEKKRIRKDFGKRPQVLDVPYLLSIQLDSFQKFIEQDPEGQYGLEAAFRSVFPIQSYSGNSELQYVSYRLGEPVFDVQECQIRGVTYSAPLRVKLRLVIYEREAPEGTVKDIKEQEVYMGEIPLMTDNGTFVINGTERVIVSQLHRSPGVFFDSDKGKTHSSGKVLYNARIIPYRGSWLDFEFDLKDNLFVRIDRRRKLPATIILRALNYTTEQILDLFFEKVVFEIRDNKLQMELIPERLRGETASFDIEANGKVYVEKGRRITARHIRQLEKDDIKHIEVPVEYIAGKVVSKDYVDESTGELICAANMELSLDLLAKLSQSGHKRIETLFTNDLDHGPYISETVRVDPTNDRLSALVEIYRMMRPGEPPTREAAESLFENLFFSEDRYDLSAVGRMKFNRSLLRDEIEGSGILSKDDIIDVMKKLIDIRNGKGEVDDIDHLGNRRIRSVGEMAENQFRVGLVRVERAVKERLSLGDLDTLMPQDMINAKPISAAVKEFFGSSQLSQFMDQNNPLSEITHKRRISALGPGGLTRERAGFEVRDVHPTHYGRVCPIETPEGPNIGLINSLSVYAQTNEYGFLETPYRRVVDGVVTDEIHYLSAIEEGNYVIAQANSNLDDEGHFVEDLVTCRSKGESSLFSRDQVDYMDVSTQQVVSVGASLIPFLEHDDANRALMGANMQRQAVPTLRADKPLVGTGMERAVAVDSGVTAVAKRGGTVQYVDASRIVIKVNEDEMYPGEAGIDIYNLTKYTRSNQNTCINQMPCVSLGEPVERGDVLADGPSTDLGELALGQNMRVAFMPWNGYNFEDSILVSERVVQEDRFTTIHIQELACVSRDTKLGPEEITADIPNVGEAALSKLDESGIVYIGAEVTGGDILVGKVTPKGETQLTPEEKLLRAIFGEKASDVKDSSLRVPNGVSGTVIDVQVFTRDGVEKDKRALEIEEMQLKQAKKDLSEELQILEAGLFSRIRAVLVSGGVEAEKLDKLPRDRWLELGLTDEEKQNQLEQLAEQYDELKHEFEKKLEAKRRKITQGDDLAPGVLKIVKVYLAVKRRIQPGDKMAGRHGNKGVISKINPIEDMPYDENGTPVDIVLNPLGVPSRMNIGQILETHLGMAAKGIGDKINAMLKQQQEVAKLREFIQRAYDLGADVRQKVDLSTFSDDEVLRLAENLRKGMPIATPVFDGAKEAEIKELLKLGDLPTSGQITLFDGRTGEQFERPVTVGYMYMLKLNHLVDDKMHARSTGSYSLVTQQPLGGKAQFGGQRFGEMEVWALEAYGAAYTLQEMLTVKSDDVNGRTKMYKNIVDGNHQMEPGMPESFNVLLKEIRSLGINIELEDE</sequence>
<reference key="1">
    <citation type="journal article" date="2005" name="Nucleic Acids Res.">
        <title>The genome sequence of Salmonella enterica serovar Choleraesuis, a highly invasive and resistant zoonotic pathogen.</title>
        <authorList>
            <person name="Chiu C.-H."/>
            <person name="Tang P."/>
            <person name="Chu C."/>
            <person name="Hu S."/>
            <person name="Bao Q."/>
            <person name="Yu J."/>
            <person name="Chou Y.-Y."/>
            <person name="Wang H.-S."/>
            <person name="Lee Y.-S."/>
        </authorList>
    </citation>
    <scope>NUCLEOTIDE SEQUENCE [LARGE SCALE GENOMIC DNA]</scope>
    <source>
        <strain>SC-B67</strain>
    </source>
</reference>
<feature type="chain" id="PRO_0000224103" description="DNA-directed RNA polymerase subunit beta">
    <location>
        <begin position="1"/>
        <end position="1342"/>
    </location>
</feature>
<gene>
    <name evidence="1" type="primary">rpoB</name>
    <name type="ordered locus">SCH_4037</name>
</gene>
<proteinExistence type="inferred from homology"/>
<protein>
    <recommendedName>
        <fullName evidence="1">DNA-directed RNA polymerase subunit beta</fullName>
        <shortName evidence="1">RNAP subunit beta</shortName>
        <ecNumber evidence="1">2.7.7.6</ecNumber>
    </recommendedName>
    <alternativeName>
        <fullName evidence="1">RNA polymerase subunit beta</fullName>
    </alternativeName>
    <alternativeName>
        <fullName evidence="1">Transcriptase subunit beta</fullName>
    </alternativeName>
</protein>
<comment type="function">
    <text evidence="1">DNA-dependent RNA polymerase catalyzes the transcription of DNA into RNA using the four ribonucleoside triphosphates as substrates.</text>
</comment>
<comment type="catalytic activity">
    <reaction evidence="1">
        <text>RNA(n) + a ribonucleoside 5'-triphosphate = RNA(n+1) + diphosphate</text>
        <dbReference type="Rhea" id="RHEA:21248"/>
        <dbReference type="Rhea" id="RHEA-COMP:14527"/>
        <dbReference type="Rhea" id="RHEA-COMP:17342"/>
        <dbReference type="ChEBI" id="CHEBI:33019"/>
        <dbReference type="ChEBI" id="CHEBI:61557"/>
        <dbReference type="ChEBI" id="CHEBI:140395"/>
        <dbReference type="EC" id="2.7.7.6"/>
    </reaction>
</comment>
<comment type="subunit">
    <text evidence="1">The RNAP catalytic core consists of 2 alpha, 1 beta, 1 beta' and 1 omega subunit. When a sigma factor is associated with the core the holoenzyme is formed, which can initiate transcription.</text>
</comment>
<comment type="similarity">
    <text evidence="1">Belongs to the RNA polymerase beta chain family.</text>
</comment>
<comment type="sequence caution" evidence="2">
    <conflict type="erroneous initiation">
        <sequence resource="EMBL-CDS" id="AAX67943"/>
    </conflict>
</comment>
<name>RPOB_SALCH</name>
<organism>
    <name type="scientific">Salmonella choleraesuis (strain SC-B67)</name>
    <dbReference type="NCBI Taxonomy" id="321314"/>
    <lineage>
        <taxon>Bacteria</taxon>
        <taxon>Pseudomonadati</taxon>
        <taxon>Pseudomonadota</taxon>
        <taxon>Gammaproteobacteria</taxon>
        <taxon>Enterobacterales</taxon>
        <taxon>Enterobacteriaceae</taxon>
        <taxon>Salmonella</taxon>
    </lineage>
</organism>
<dbReference type="EC" id="2.7.7.6" evidence="1"/>
<dbReference type="EMBL" id="AE017220">
    <property type="protein sequence ID" value="AAX67943.1"/>
    <property type="status" value="ALT_INIT"/>
    <property type="molecule type" value="Genomic_DNA"/>
</dbReference>
<dbReference type="RefSeq" id="WP_024131388.1">
    <property type="nucleotide sequence ID" value="NC_006905.1"/>
</dbReference>
<dbReference type="SMR" id="Q57H69"/>
<dbReference type="KEGG" id="sec:SCH_4037"/>
<dbReference type="HOGENOM" id="CLU_000524_4_3_6"/>
<dbReference type="Proteomes" id="UP000000538">
    <property type="component" value="Chromosome"/>
</dbReference>
<dbReference type="GO" id="GO:0000428">
    <property type="term" value="C:DNA-directed RNA polymerase complex"/>
    <property type="evidence" value="ECO:0007669"/>
    <property type="project" value="UniProtKB-KW"/>
</dbReference>
<dbReference type="GO" id="GO:0003677">
    <property type="term" value="F:DNA binding"/>
    <property type="evidence" value="ECO:0007669"/>
    <property type="project" value="UniProtKB-UniRule"/>
</dbReference>
<dbReference type="GO" id="GO:0003899">
    <property type="term" value="F:DNA-directed RNA polymerase activity"/>
    <property type="evidence" value="ECO:0007669"/>
    <property type="project" value="UniProtKB-UniRule"/>
</dbReference>
<dbReference type="GO" id="GO:0032549">
    <property type="term" value="F:ribonucleoside binding"/>
    <property type="evidence" value="ECO:0007669"/>
    <property type="project" value="InterPro"/>
</dbReference>
<dbReference type="GO" id="GO:0006351">
    <property type="term" value="P:DNA-templated transcription"/>
    <property type="evidence" value="ECO:0007669"/>
    <property type="project" value="UniProtKB-UniRule"/>
</dbReference>
<dbReference type="CDD" id="cd00653">
    <property type="entry name" value="RNA_pol_B_RPB2"/>
    <property type="match status" value="1"/>
</dbReference>
<dbReference type="FunFam" id="2.30.150.10:FF:000001">
    <property type="entry name" value="DNA-directed RNA polymerase subunit beta"/>
    <property type="match status" value="1"/>
</dbReference>
<dbReference type="FunFam" id="2.40.270.10:FF:000003">
    <property type="entry name" value="DNA-directed RNA polymerase subunit beta"/>
    <property type="match status" value="1"/>
</dbReference>
<dbReference type="FunFam" id="2.40.270.10:FF:000004">
    <property type="entry name" value="DNA-directed RNA polymerase subunit beta"/>
    <property type="match status" value="1"/>
</dbReference>
<dbReference type="FunFam" id="2.40.50.100:FF:000006">
    <property type="entry name" value="DNA-directed RNA polymerase subunit beta"/>
    <property type="match status" value="1"/>
</dbReference>
<dbReference type="FunFam" id="2.40.50.150:FF:000001">
    <property type="entry name" value="DNA-directed RNA polymerase subunit beta"/>
    <property type="match status" value="1"/>
</dbReference>
<dbReference type="FunFam" id="3.90.1100.10:FF:000002">
    <property type="entry name" value="DNA-directed RNA polymerase subunit beta"/>
    <property type="match status" value="1"/>
</dbReference>
<dbReference type="FunFam" id="3.90.1110.10:FF:000001">
    <property type="entry name" value="DNA-directed RNA polymerase subunit beta"/>
    <property type="match status" value="1"/>
</dbReference>
<dbReference type="FunFam" id="3.90.1110.10:FF:000004">
    <property type="entry name" value="DNA-directed RNA polymerase subunit beta"/>
    <property type="match status" value="1"/>
</dbReference>
<dbReference type="FunFam" id="3.90.1800.10:FF:000001">
    <property type="entry name" value="DNA-directed RNA polymerase subunit beta"/>
    <property type="match status" value="1"/>
</dbReference>
<dbReference type="Gene3D" id="2.40.50.100">
    <property type="match status" value="1"/>
</dbReference>
<dbReference type="Gene3D" id="2.40.50.150">
    <property type="match status" value="1"/>
</dbReference>
<dbReference type="Gene3D" id="3.90.1100.10">
    <property type="match status" value="2"/>
</dbReference>
<dbReference type="Gene3D" id="6.10.140.1670">
    <property type="match status" value="1"/>
</dbReference>
<dbReference type="Gene3D" id="2.30.150.10">
    <property type="entry name" value="DNA-directed RNA polymerase, beta subunit, external 1 domain"/>
    <property type="match status" value="1"/>
</dbReference>
<dbReference type="Gene3D" id="2.40.270.10">
    <property type="entry name" value="DNA-directed RNA polymerase, subunit 2, domain 6"/>
    <property type="match status" value="1"/>
</dbReference>
<dbReference type="Gene3D" id="3.90.1800.10">
    <property type="entry name" value="RNA polymerase alpha subunit dimerisation domain"/>
    <property type="match status" value="1"/>
</dbReference>
<dbReference type="Gene3D" id="3.90.1110.10">
    <property type="entry name" value="RNA polymerase Rpb2, domain 2"/>
    <property type="match status" value="1"/>
</dbReference>
<dbReference type="HAMAP" id="MF_01321">
    <property type="entry name" value="RNApol_bact_RpoB"/>
    <property type="match status" value="1"/>
</dbReference>
<dbReference type="InterPro" id="IPR042107">
    <property type="entry name" value="DNA-dir_RNA_pol_bsu_ext_1_sf"/>
</dbReference>
<dbReference type="InterPro" id="IPR019462">
    <property type="entry name" value="DNA-dir_RNA_pol_bsu_external_1"/>
</dbReference>
<dbReference type="InterPro" id="IPR015712">
    <property type="entry name" value="DNA-dir_RNA_pol_su2"/>
</dbReference>
<dbReference type="InterPro" id="IPR007120">
    <property type="entry name" value="DNA-dir_RNAP_su2_dom"/>
</dbReference>
<dbReference type="InterPro" id="IPR037033">
    <property type="entry name" value="DNA-dir_RNAP_su2_hyb_sf"/>
</dbReference>
<dbReference type="InterPro" id="IPR010243">
    <property type="entry name" value="RNA_pol_bsu_bac"/>
</dbReference>
<dbReference type="InterPro" id="IPR007121">
    <property type="entry name" value="RNA_pol_bsu_CS"/>
</dbReference>
<dbReference type="InterPro" id="IPR007644">
    <property type="entry name" value="RNA_pol_bsu_protrusion"/>
</dbReference>
<dbReference type="InterPro" id="IPR007642">
    <property type="entry name" value="RNA_pol_Rpb2_2"/>
</dbReference>
<dbReference type="InterPro" id="IPR037034">
    <property type="entry name" value="RNA_pol_Rpb2_2_sf"/>
</dbReference>
<dbReference type="InterPro" id="IPR007645">
    <property type="entry name" value="RNA_pol_Rpb2_3"/>
</dbReference>
<dbReference type="InterPro" id="IPR007641">
    <property type="entry name" value="RNA_pol_Rpb2_7"/>
</dbReference>
<dbReference type="InterPro" id="IPR014724">
    <property type="entry name" value="RNA_pol_RPB2_OB-fold"/>
</dbReference>
<dbReference type="NCBIfam" id="NF001616">
    <property type="entry name" value="PRK00405.1"/>
    <property type="match status" value="1"/>
</dbReference>
<dbReference type="NCBIfam" id="TIGR02013">
    <property type="entry name" value="rpoB"/>
    <property type="match status" value="1"/>
</dbReference>
<dbReference type="PANTHER" id="PTHR20856">
    <property type="entry name" value="DNA-DIRECTED RNA POLYMERASE I SUBUNIT 2"/>
    <property type="match status" value="1"/>
</dbReference>
<dbReference type="Pfam" id="PF04563">
    <property type="entry name" value="RNA_pol_Rpb2_1"/>
    <property type="match status" value="1"/>
</dbReference>
<dbReference type="Pfam" id="PF04561">
    <property type="entry name" value="RNA_pol_Rpb2_2"/>
    <property type="match status" value="2"/>
</dbReference>
<dbReference type="Pfam" id="PF04565">
    <property type="entry name" value="RNA_pol_Rpb2_3"/>
    <property type="match status" value="1"/>
</dbReference>
<dbReference type="Pfam" id="PF10385">
    <property type="entry name" value="RNA_pol_Rpb2_45"/>
    <property type="match status" value="1"/>
</dbReference>
<dbReference type="Pfam" id="PF00562">
    <property type="entry name" value="RNA_pol_Rpb2_6"/>
    <property type="match status" value="1"/>
</dbReference>
<dbReference type="Pfam" id="PF04560">
    <property type="entry name" value="RNA_pol_Rpb2_7"/>
    <property type="match status" value="1"/>
</dbReference>
<dbReference type="SUPFAM" id="SSF64484">
    <property type="entry name" value="beta and beta-prime subunits of DNA dependent RNA-polymerase"/>
    <property type="match status" value="1"/>
</dbReference>
<dbReference type="PROSITE" id="PS01166">
    <property type="entry name" value="RNA_POL_BETA"/>
    <property type="match status" value="1"/>
</dbReference>
<evidence type="ECO:0000255" key="1">
    <source>
        <dbReference type="HAMAP-Rule" id="MF_01321"/>
    </source>
</evidence>
<evidence type="ECO:0000305" key="2"/>
<accession>Q57H69</accession>